<keyword id="KW-0067">ATP-binding</keyword>
<keyword id="KW-0131">Cell cycle</keyword>
<keyword id="KW-0132">Cell division</keyword>
<keyword id="KW-0133">Cell shape</keyword>
<keyword id="KW-0961">Cell wall biogenesis/degradation</keyword>
<keyword id="KW-0963">Cytoplasm</keyword>
<keyword id="KW-0436">Ligase</keyword>
<keyword id="KW-0547">Nucleotide-binding</keyword>
<keyword id="KW-0573">Peptidoglycan synthesis</keyword>
<keyword id="KW-1185">Reference proteome</keyword>
<sequence>MFGDLASPFVLVLGLGESGLAMARWCARHGARARVADTREAPANLPALRAHVPDAEFIGGPFAPSLLEGVALVAISPGLSPLDAAVAALLDGARERAVPVWGEIELFARALAGLKLAQGYAPRVLAITGTNGKTTTTALAGALVQRAGKTVGVAGNISPSALDKLTECVDAGTLPDVWVLELSSFQLETTHTLDADAATILNITQDHLDWHGSMAAYAAAKGRIFGAGTVRVLNRQDADVMAFAGKRGGDVTFGTDEPATPEALGLLRDGGIPWIVLAEADDDDLPKPARRKKGDTTPAAPVPVRLKRLMPADALRIRGLHNATNAMAALALCRAIGLPASALLHGLRDYAGEPHRVELIAAFDDIEFFDDSKGTNVGATVAALSGLSKRVVLIAGGDGKGQDFSPLAAPVAQYARAVVLIGRDAPRIRAALADSGVELVEAATLEAAVQEAAARAQAGDAVLLSPACASFDMFRNYEHRAQVFHEAVAALAADRGVML</sequence>
<proteinExistence type="inferred from homology"/>
<accession>Q8XVI5</accession>
<reference key="1">
    <citation type="journal article" date="2002" name="Nature">
        <title>Genome sequence of the plant pathogen Ralstonia solanacearum.</title>
        <authorList>
            <person name="Salanoubat M."/>
            <person name="Genin S."/>
            <person name="Artiguenave F."/>
            <person name="Gouzy J."/>
            <person name="Mangenot S."/>
            <person name="Arlat M."/>
            <person name="Billault A."/>
            <person name="Brottier P."/>
            <person name="Camus J.-C."/>
            <person name="Cattolico L."/>
            <person name="Chandler M."/>
            <person name="Choisne N."/>
            <person name="Claudel-Renard C."/>
            <person name="Cunnac S."/>
            <person name="Demange N."/>
            <person name="Gaspin C."/>
            <person name="Lavie M."/>
            <person name="Moisan A."/>
            <person name="Robert C."/>
            <person name="Saurin W."/>
            <person name="Schiex T."/>
            <person name="Siguier P."/>
            <person name="Thebault P."/>
            <person name="Whalen M."/>
            <person name="Wincker P."/>
            <person name="Levy M."/>
            <person name="Weissenbach J."/>
            <person name="Boucher C.A."/>
        </authorList>
    </citation>
    <scope>NUCLEOTIDE SEQUENCE [LARGE SCALE GENOMIC DNA]</scope>
    <source>
        <strain>ATCC BAA-1114 / GMI1000</strain>
    </source>
</reference>
<organism>
    <name type="scientific">Ralstonia nicotianae (strain ATCC BAA-1114 / GMI1000)</name>
    <name type="common">Ralstonia solanacearum</name>
    <dbReference type="NCBI Taxonomy" id="267608"/>
    <lineage>
        <taxon>Bacteria</taxon>
        <taxon>Pseudomonadati</taxon>
        <taxon>Pseudomonadota</taxon>
        <taxon>Betaproteobacteria</taxon>
        <taxon>Burkholderiales</taxon>
        <taxon>Burkholderiaceae</taxon>
        <taxon>Ralstonia</taxon>
        <taxon>Ralstonia solanacearum species complex</taxon>
    </lineage>
</organism>
<protein>
    <recommendedName>
        <fullName evidence="1">UDP-N-acetylmuramoylalanine--D-glutamate ligase</fullName>
        <ecNumber evidence="1">6.3.2.9</ecNumber>
    </recommendedName>
    <alternativeName>
        <fullName evidence="1">D-glutamic acid-adding enzyme</fullName>
    </alternativeName>
    <alternativeName>
        <fullName evidence="1">UDP-N-acetylmuramoyl-L-alanyl-D-glutamate synthetase</fullName>
    </alternativeName>
</protein>
<gene>
    <name evidence="1" type="primary">murD</name>
    <name type="ordered locus">RSc2846</name>
    <name type="ORF">RS00259</name>
</gene>
<evidence type="ECO:0000255" key="1">
    <source>
        <dbReference type="HAMAP-Rule" id="MF_00639"/>
    </source>
</evidence>
<evidence type="ECO:0000305" key="2"/>
<dbReference type="EC" id="6.3.2.9" evidence="1"/>
<dbReference type="EMBL" id="AL646052">
    <property type="protein sequence ID" value="CAD16553.1"/>
    <property type="status" value="ALT_INIT"/>
    <property type="molecule type" value="Genomic_DNA"/>
</dbReference>
<dbReference type="RefSeq" id="WP_011002752.1">
    <property type="nucleotide sequence ID" value="NC_003295.1"/>
</dbReference>
<dbReference type="SMR" id="Q8XVI5"/>
<dbReference type="STRING" id="267608.RSc2846"/>
<dbReference type="EnsemblBacteria" id="CAD16553">
    <property type="protein sequence ID" value="CAD16553"/>
    <property type="gene ID" value="RSc2846"/>
</dbReference>
<dbReference type="KEGG" id="rso:RSc2846"/>
<dbReference type="PATRIC" id="fig|267608.8.peg.2896"/>
<dbReference type="eggNOG" id="COG0771">
    <property type="taxonomic scope" value="Bacteria"/>
</dbReference>
<dbReference type="HOGENOM" id="CLU_032540_1_1_4"/>
<dbReference type="UniPathway" id="UPA00219"/>
<dbReference type="Proteomes" id="UP000001436">
    <property type="component" value="Chromosome"/>
</dbReference>
<dbReference type="GO" id="GO:0005737">
    <property type="term" value="C:cytoplasm"/>
    <property type="evidence" value="ECO:0007669"/>
    <property type="project" value="UniProtKB-SubCell"/>
</dbReference>
<dbReference type="GO" id="GO:0005524">
    <property type="term" value="F:ATP binding"/>
    <property type="evidence" value="ECO:0007669"/>
    <property type="project" value="UniProtKB-UniRule"/>
</dbReference>
<dbReference type="GO" id="GO:0008764">
    <property type="term" value="F:UDP-N-acetylmuramoylalanine-D-glutamate ligase activity"/>
    <property type="evidence" value="ECO:0007669"/>
    <property type="project" value="UniProtKB-UniRule"/>
</dbReference>
<dbReference type="GO" id="GO:0051301">
    <property type="term" value="P:cell division"/>
    <property type="evidence" value="ECO:0007669"/>
    <property type="project" value="UniProtKB-KW"/>
</dbReference>
<dbReference type="GO" id="GO:0071555">
    <property type="term" value="P:cell wall organization"/>
    <property type="evidence" value="ECO:0007669"/>
    <property type="project" value="UniProtKB-KW"/>
</dbReference>
<dbReference type="GO" id="GO:0009252">
    <property type="term" value="P:peptidoglycan biosynthetic process"/>
    <property type="evidence" value="ECO:0007669"/>
    <property type="project" value="UniProtKB-UniRule"/>
</dbReference>
<dbReference type="GO" id="GO:0008360">
    <property type="term" value="P:regulation of cell shape"/>
    <property type="evidence" value="ECO:0007669"/>
    <property type="project" value="UniProtKB-KW"/>
</dbReference>
<dbReference type="Gene3D" id="3.90.190.20">
    <property type="entry name" value="Mur ligase, C-terminal domain"/>
    <property type="match status" value="1"/>
</dbReference>
<dbReference type="Gene3D" id="3.40.1190.10">
    <property type="entry name" value="Mur-like, catalytic domain"/>
    <property type="match status" value="1"/>
</dbReference>
<dbReference type="Gene3D" id="3.40.50.720">
    <property type="entry name" value="NAD(P)-binding Rossmann-like Domain"/>
    <property type="match status" value="1"/>
</dbReference>
<dbReference type="HAMAP" id="MF_00639">
    <property type="entry name" value="MurD"/>
    <property type="match status" value="1"/>
</dbReference>
<dbReference type="InterPro" id="IPR036565">
    <property type="entry name" value="Mur-like_cat_sf"/>
</dbReference>
<dbReference type="InterPro" id="IPR004101">
    <property type="entry name" value="Mur_ligase_C"/>
</dbReference>
<dbReference type="InterPro" id="IPR036615">
    <property type="entry name" value="Mur_ligase_C_dom_sf"/>
</dbReference>
<dbReference type="InterPro" id="IPR013221">
    <property type="entry name" value="Mur_ligase_cen"/>
</dbReference>
<dbReference type="InterPro" id="IPR005762">
    <property type="entry name" value="MurD"/>
</dbReference>
<dbReference type="NCBIfam" id="TIGR01087">
    <property type="entry name" value="murD"/>
    <property type="match status" value="1"/>
</dbReference>
<dbReference type="PANTHER" id="PTHR43692">
    <property type="entry name" value="UDP-N-ACETYLMURAMOYLALANINE--D-GLUTAMATE LIGASE"/>
    <property type="match status" value="1"/>
</dbReference>
<dbReference type="PANTHER" id="PTHR43692:SF1">
    <property type="entry name" value="UDP-N-ACETYLMURAMOYLALANINE--D-GLUTAMATE LIGASE"/>
    <property type="match status" value="1"/>
</dbReference>
<dbReference type="Pfam" id="PF02875">
    <property type="entry name" value="Mur_ligase_C"/>
    <property type="match status" value="1"/>
</dbReference>
<dbReference type="Pfam" id="PF08245">
    <property type="entry name" value="Mur_ligase_M"/>
    <property type="match status" value="1"/>
</dbReference>
<dbReference type="Pfam" id="PF21799">
    <property type="entry name" value="MurD-like_N"/>
    <property type="match status" value="1"/>
</dbReference>
<dbReference type="SUPFAM" id="SSF51984">
    <property type="entry name" value="MurCD N-terminal domain"/>
    <property type="match status" value="1"/>
</dbReference>
<dbReference type="SUPFAM" id="SSF53623">
    <property type="entry name" value="MurD-like peptide ligases, catalytic domain"/>
    <property type="match status" value="1"/>
</dbReference>
<dbReference type="SUPFAM" id="SSF53244">
    <property type="entry name" value="MurD-like peptide ligases, peptide-binding domain"/>
    <property type="match status" value="1"/>
</dbReference>
<name>MURD_RALN1</name>
<comment type="function">
    <text evidence="1">Cell wall formation. Catalyzes the addition of glutamate to the nucleotide precursor UDP-N-acetylmuramoyl-L-alanine (UMA).</text>
</comment>
<comment type="catalytic activity">
    <reaction evidence="1">
        <text>UDP-N-acetyl-alpha-D-muramoyl-L-alanine + D-glutamate + ATP = UDP-N-acetyl-alpha-D-muramoyl-L-alanyl-D-glutamate + ADP + phosphate + H(+)</text>
        <dbReference type="Rhea" id="RHEA:16429"/>
        <dbReference type="ChEBI" id="CHEBI:15378"/>
        <dbReference type="ChEBI" id="CHEBI:29986"/>
        <dbReference type="ChEBI" id="CHEBI:30616"/>
        <dbReference type="ChEBI" id="CHEBI:43474"/>
        <dbReference type="ChEBI" id="CHEBI:83898"/>
        <dbReference type="ChEBI" id="CHEBI:83900"/>
        <dbReference type="ChEBI" id="CHEBI:456216"/>
        <dbReference type="EC" id="6.3.2.9"/>
    </reaction>
</comment>
<comment type="pathway">
    <text evidence="1">Cell wall biogenesis; peptidoglycan biosynthesis.</text>
</comment>
<comment type="subcellular location">
    <subcellularLocation>
        <location evidence="1">Cytoplasm</location>
    </subcellularLocation>
</comment>
<comment type="similarity">
    <text evidence="1">Belongs to the MurCDEF family.</text>
</comment>
<comment type="sequence caution" evidence="2">
    <conflict type="erroneous initiation">
        <sequence resource="EMBL-CDS" id="CAD16553"/>
    </conflict>
</comment>
<feature type="chain" id="PRO_0000109067" description="UDP-N-acetylmuramoylalanine--D-glutamate ligase">
    <location>
        <begin position="1"/>
        <end position="499"/>
    </location>
</feature>
<feature type="binding site" evidence="1">
    <location>
        <begin position="129"/>
        <end position="135"/>
    </location>
    <ligand>
        <name>ATP</name>
        <dbReference type="ChEBI" id="CHEBI:30616"/>
    </ligand>
</feature>